<comment type="function">
    <text evidence="1">Chaperone involved in the maturation of iron-sulfur cluster-containing proteins. Has a low intrinsic ATPase activity which is markedly stimulated by HscB.</text>
</comment>
<comment type="similarity">
    <text evidence="1">Belongs to the heat shock protein 70 family.</text>
</comment>
<gene>
    <name evidence="1" type="primary">hscA</name>
    <name type="ordered locus">CV_1089</name>
</gene>
<dbReference type="EMBL" id="AE016825">
    <property type="protein sequence ID" value="AAQ58764.1"/>
    <property type="molecule type" value="Genomic_DNA"/>
</dbReference>
<dbReference type="RefSeq" id="WP_011134644.1">
    <property type="nucleotide sequence ID" value="NC_005085.1"/>
</dbReference>
<dbReference type="SMR" id="Q7NZ33"/>
<dbReference type="STRING" id="243365.CV_1089"/>
<dbReference type="GeneID" id="66366787"/>
<dbReference type="KEGG" id="cvi:CV_1089"/>
<dbReference type="eggNOG" id="COG0443">
    <property type="taxonomic scope" value="Bacteria"/>
</dbReference>
<dbReference type="HOGENOM" id="CLU_005965_2_1_4"/>
<dbReference type="OrthoDB" id="9766019at2"/>
<dbReference type="Proteomes" id="UP000001424">
    <property type="component" value="Chromosome"/>
</dbReference>
<dbReference type="GO" id="GO:0005524">
    <property type="term" value="F:ATP binding"/>
    <property type="evidence" value="ECO:0007669"/>
    <property type="project" value="UniProtKB-KW"/>
</dbReference>
<dbReference type="GO" id="GO:0016887">
    <property type="term" value="F:ATP hydrolysis activity"/>
    <property type="evidence" value="ECO:0007669"/>
    <property type="project" value="UniProtKB-UniRule"/>
</dbReference>
<dbReference type="GO" id="GO:0140662">
    <property type="term" value="F:ATP-dependent protein folding chaperone"/>
    <property type="evidence" value="ECO:0007669"/>
    <property type="project" value="InterPro"/>
</dbReference>
<dbReference type="GO" id="GO:0051082">
    <property type="term" value="F:unfolded protein binding"/>
    <property type="evidence" value="ECO:0007669"/>
    <property type="project" value="InterPro"/>
</dbReference>
<dbReference type="GO" id="GO:0016226">
    <property type="term" value="P:iron-sulfur cluster assembly"/>
    <property type="evidence" value="ECO:0007669"/>
    <property type="project" value="InterPro"/>
</dbReference>
<dbReference type="CDD" id="cd10236">
    <property type="entry name" value="ASKHA_NBD_HSP70_HscA"/>
    <property type="match status" value="1"/>
</dbReference>
<dbReference type="FunFam" id="3.30.420.40:FF:000046">
    <property type="entry name" value="Chaperone protein HscA"/>
    <property type="match status" value="1"/>
</dbReference>
<dbReference type="FunFam" id="2.60.34.10:FF:000005">
    <property type="entry name" value="Chaperone protein HscA homolog"/>
    <property type="match status" value="1"/>
</dbReference>
<dbReference type="Gene3D" id="1.20.1270.10">
    <property type="match status" value="1"/>
</dbReference>
<dbReference type="Gene3D" id="3.30.420.40">
    <property type="match status" value="2"/>
</dbReference>
<dbReference type="Gene3D" id="3.90.640.10">
    <property type="entry name" value="Actin, Chain A, domain 4"/>
    <property type="match status" value="1"/>
</dbReference>
<dbReference type="Gene3D" id="2.60.34.10">
    <property type="entry name" value="Substrate Binding Domain Of DNAk, Chain A, domain 1"/>
    <property type="match status" value="1"/>
</dbReference>
<dbReference type="HAMAP" id="MF_00679">
    <property type="entry name" value="HscA"/>
    <property type="match status" value="1"/>
</dbReference>
<dbReference type="InterPro" id="IPR043129">
    <property type="entry name" value="ATPase_NBD"/>
</dbReference>
<dbReference type="InterPro" id="IPR018181">
    <property type="entry name" value="Heat_shock_70_CS"/>
</dbReference>
<dbReference type="InterPro" id="IPR042039">
    <property type="entry name" value="HscA_NBD"/>
</dbReference>
<dbReference type="InterPro" id="IPR029048">
    <property type="entry name" value="HSP70_C_sf"/>
</dbReference>
<dbReference type="InterPro" id="IPR029047">
    <property type="entry name" value="HSP70_peptide-bd_sf"/>
</dbReference>
<dbReference type="InterPro" id="IPR013126">
    <property type="entry name" value="Hsp_70_fam"/>
</dbReference>
<dbReference type="InterPro" id="IPR010236">
    <property type="entry name" value="ISC_FeS_clus_asmbl_HscA"/>
</dbReference>
<dbReference type="NCBIfam" id="TIGR01991">
    <property type="entry name" value="HscA"/>
    <property type="match status" value="1"/>
</dbReference>
<dbReference type="NCBIfam" id="NF003520">
    <property type="entry name" value="PRK05183.1"/>
    <property type="match status" value="1"/>
</dbReference>
<dbReference type="PANTHER" id="PTHR19375">
    <property type="entry name" value="HEAT SHOCK PROTEIN 70KDA"/>
    <property type="match status" value="1"/>
</dbReference>
<dbReference type="Pfam" id="PF00012">
    <property type="entry name" value="HSP70"/>
    <property type="match status" value="1"/>
</dbReference>
<dbReference type="PRINTS" id="PR00301">
    <property type="entry name" value="HEATSHOCK70"/>
</dbReference>
<dbReference type="SUPFAM" id="SSF53067">
    <property type="entry name" value="Actin-like ATPase domain"/>
    <property type="match status" value="2"/>
</dbReference>
<dbReference type="SUPFAM" id="SSF100934">
    <property type="entry name" value="Heat shock protein 70kD (HSP70), C-terminal subdomain"/>
    <property type="match status" value="1"/>
</dbReference>
<dbReference type="SUPFAM" id="SSF100920">
    <property type="entry name" value="Heat shock protein 70kD (HSP70), peptide-binding domain"/>
    <property type="match status" value="1"/>
</dbReference>
<dbReference type="PROSITE" id="PS00297">
    <property type="entry name" value="HSP70_1"/>
    <property type="match status" value="1"/>
</dbReference>
<dbReference type="PROSITE" id="PS00329">
    <property type="entry name" value="HSP70_2"/>
    <property type="match status" value="1"/>
</dbReference>
<dbReference type="PROSITE" id="PS01036">
    <property type="entry name" value="HSP70_3"/>
    <property type="match status" value="1"/>
</dbReference>
<proteinExistence type="inferred from homology"/>
<accession>Q7NZ33</accession>
<name>HSCA_CHRVO</name>
<reference key="1">
    <citation type="journal article" date="2003" name="Proc. Natl. Acad. Sci. U.S.A.">
        <title>The complete genome sequence of Chromobacterium violaceum reveals remarkable and exploitable bacterial adaptability.</title>
        <authorList>
            <person name="Vasconcelos A.T.R."/>
            <person name="de Almeida D.F."/>
            <person name="Hungria M."/>
            <person name="Guimaraes C.T."/>
            <person name="Antonio R.V."/>
            <person name="Almeida F.C."/>
            <person name="de Almeida L.G.P."/>
            <person name="de Almeida R."/>
            <person name="Alves-Gomes J.A."/>
            <person name="Andrade E.M."/>
            <person name="Araripe J."/>
            <person name="de Araujo M.F.F."/>
            <person name="Astolfi-Filho S."/>
            <person name="Azevedo V."/>
            <person name="Baptista A.J."/>
            <person name="Bataus L.A.M."/>
            <person name="Batista J.S."/>
            <person name="Belo A."/>
            <person name="van den Berg C."/>
            <person name="Bogo M."/>
            <person name="Bonatto S."/>
            <person name="Bordignon J."/>
            <person name="Brigido M.M."/>
            <person name="Brito C.A."/>
            <person name="Brocchi M."/>
            <person name="Burity H.A."/>
            <person name="Camargo A.A."/>
            <person name="Cardoso D.D.P."/>
            <person name="Carneiro N.P."/>
            <person name="Carraro D.M."/>
            <person name="Carvalho C.M.B."/>
            <person name="Cascardo J.C.M."/>
            <person name="Cavada B.S."/>
            <person name="Chueire L.M.O."/>
            <person name="Creczynski-Pasa T.B."/>
            <person name="Cunha-Junior N.C."/>
            <person name="Fagundes N."/>
            <person name="Falcao C.L."/>
            <person name="Fantinatti F."/>
            <person name="Farias I.P."/>
            <person name="Felipe M.S.S."/>
            <person name="Ferrari L.P."/>
            <person name="Ferro J.A."/>
            <person name="Ferro M.I.T."/>
            <person name="Franco G.R."/>
            <person name="Freitas N.S.A."/>
            <person name="Furlan L.R."/>
            <person name="Gazzinelli R.T."/>
            <person name="Gomes E.A."/>
            <person name="Goncalves P.R."/>
            <person name="Grangeiro T.B."/>
            <person name="Grattapaglia D."/>
            <person name="Grisard E.C."/>
            <person name="Hanna E.S."/>
            <person name="Jardim S.N."/>
            <person name="Laurino J."/>
            <person name="Leoi L.C.T."/>
            <person name="Lima L.F.A."/>
            <person name="Loureiro M.F."/>
            <person name="Lyra M.C.C.P."/>
            <person name="Madeira H.M.F."/>
            <person name="Manfio G.P."/>
            <person name="Maranhao A.Q."/>
            <person name="Martins W.S."/>
            <person name="di Mauro S.M.Z."/>
            <person name="de Medeiros S.R.B."/>
            <person name="Meissner R.V."/>
            <person name="Moreira M.A.M."/>
            <person name="Nascimento F.F."/>
            <person name="Nicolas M.F."/>
            <person name="Oliveira J.G."/>
            <person name="Oliveira S.C."/>
            <person name="Paixao R.F.C."/>
            <person name="Parente J.A."/>
            <person name="Pedrosa F.O."/>
            <person name="Pena S.D.J."/>
            <person name="Pereira J.O."/>
            <person name="Pereira M."/>
            <person name="Pinto L.S.R.C."/>
            <person name="Pinto L.S."/>
            <person name="Porto J.I.R."/>
            <person name="Potrich D.P."/>
            <person name="Ramalho-Neto C.E."/>
            <person name="Reis A.M.M."/>
            <person name="Rigo L.U."/>
            <person name="Rondinelli E."/>
            <person name="Santos E.B.P."/>
            <person name="Santos F.R."/>
            <person name="Schneider M.P.C."/>
            <person name="Seuanez H.N."/>
            <person name="Silva A.M.R."/>
            <person name="da Silva A.L.C."/>
            <person name="Silva D.W."/>
            <person name="Silva R."/>
            <person name="Simoes I.C."/>
            <person name="Simon D."/>
            <person name="Soares C.M.A."/>
            <person name="Soares R.B.A."/>
            <person name="Souza E.M."/>
            <person name="Souza K.R.L."/>
            <person name="Souza R.C."/>
            <person name="Steffens M.B.R."/>
            <person name="Steindel M."/>
            <person name="Teixeira S.R."/>
            <person name="Urmenyi T."/>
            <person name="Vettore A."/>
            <person name="Wassem R."/>
            <person name="Zaha A."/>
            <person name="Simpson A.J.G."/>
        </authorList>
    </citation>
    <scope>NUCLEOTIDE SEQUENCE [LARGE SCALE GENOMIC DNA]</scope>
    <source>
        <strain>ATCC 12472 / DSM 30191 / JCM 1249 / CCUG 213 / NBRC 12614 / NCIMB 9131 / NCTC 9757 / MK</strain>
    </source>
</reference>
<evidence type="ECO:0000255" key="1">
    <source>
        <dbReference type="HAMAP-Rule" id="MF_00679"/>
    </source>
</evidence>
<protein>
    <recommendedName>
        <fullName evidence="1">Chaperone protein HscA homolog</fullName>
    </recommendedName>
</protein>
<keyword id="KW-0067">ATP-binding</keyword>
<keyword id="KW-0143">Chaperone</keyword>
<keyword id="KW-0547">Nucleotide-binding</keyword>
<keyword id="KW-1185">Reference proteome</keyword>
<organism>
    <name type="scientific">Chromobacterium violaceum (strain ATCC 12472 / DSM 30191 / JCM 1249 / CCUG 213 / NBRC 12614 / NCIMB 9131 / NCTC 9757 / MK)</name>
    <dbReference type="NCBI Taxonomy" id="243365"/>
    <lineage>
        <taxon>Bacteria</taxon>
        <taxon>Pseudomonadati</taxon>
        <taxon>Pseudomonadota</taxon>
        <taxon>Betaproteobacteria</taxon>
        <taxon>Neisseriales</taxon>
        <taxon>Chromobacteriaceae</taxon>
        <taxon>Chromobacterium</taxon>
    </lineage>
</organism>
<feature type="chain" id="PRO_0000078624" description="Chaperone protein HscA homolog">
    <location>
        <begin position="1"/>
        <end position="619"/>
    </location>
</feature>
<sequence>MALLQIAEPGLSAAPHQHRLAVGIDLGTTNSLVATVRSGSAAVLPDETGRSLLPSVVRYGDQGVLAVGYDAQKEQNRDPHNTIVSVKRFMGRGVSDIKDAGSLPYRFVDAPGMVQLVTRAGVKSPVEVSSDILRALKERAEASLGGELTGAVITVPAYFDDAQRQATKDAARLAGLNVLRLLNEPTAAAIAYGLDNGSEGTYVVYDLGGGTLDVSILKLTRGVFEVLATSGDSALGGDDFDHRVFCWLLEQAGVTAPSAHDMRLLHTRAREAKEALTDHASTRVTAILSDGQSLDLELDQATLHAITKTLVDKTLTPVRKALRDAKIAPEDIQGVVMVGGATRMPHVQKAVADYFGRAPLTNLDPDKVVALGAAIQANVLAGNKQDDEWLLLDVLPLSLGIETMGGLTEKIIPRNSTIPVARAQDFTTFKDGQTAMSIHVLQGERELVSDCRSLAKFTLTGIPPMVAGAARIRITFQVDADGLLSVTAREQTSGVESSIEVKPSYGLSDDEISRMLSESLANVQEDIEARKLREAIVDAESLRDATLNALAQDGDLLDQAERAEVEAAVAAVASAIAEGVTRRVNEASAALNHATETFASRRMDRNIQRALKGHKITDL</sequence>